<keyword id="KW-0614">Plasmid</keyword>
<keyword id="KW-1185">Reference proteome</keyword>
<proteinExistence type="predicted"/>
<dbReference type="EMBL" id="AE009443">
    <property type="protein sequence ID" value="AAO38513.1"/>
    <property type="molecule type" value="Genomic_DNA"/>
</dbReference>
<dbReference type="KEGG" id="xft:PDa0001"/>
<dbReference type="HOGENOM" id="CLU_3207185_0_0_6"/>
<dbReference type="Proteomes" id="UP000002516">
    <property type="component" value="Plasmid pXFPD1.3"/>
</dbReference>
<reference key="1">
    <citation type="journal article" date="2003" name="J. Bacteriol.">
        <title>Comparative analyses of the complete genome sequences of Pierce's disease and citrus variegated chlorosis strains of Xylella fastidiosa.</title>
        <authorList>
            <person name="Van Sluys M.A."/>
            <person name="de Oliveira M.C."/>
            <person name="Monteiro-Vitorello C.B."/>
            <person name="Miyaki C.Y."/>
            <person name="Furlan L.R."/>
            <person name="Camargo L.E.A."/>
            <person name="da Silva A.C.R."/>
            <person name="Moon D.H."/>
            <person name="Takita M.A."/>
            <person name="Lemos E.G.M."/>
            <person name="Machado M.A."/>
            <person name="Ferro M.I.T."/>
            <person name="da Silva F.R."/>
            <person name="Goldman M.H.S."/>
            <person name="Goldman G.H."/>
            <person name="Lemos M.V.F."/>
            <person name="El-Dorry H."/>
            <person name="Tsai S.M."/>
            <person name="Carrer H."/>
            <person name="Carraro D.M."/>
            <person name="de Oliveira R.C."/>
            <person name="Nunes L.R."/>
            <person name="Siqueira W.J."/>
            <person name="Coutinho L.L."/>
            <person name="Kimura E.T."/>
            <person name="Ferro E.S."/>
            <person name="Harakava R."/>
            <person name="Kuramae E.E."/>
            <person name="Marino C.L."/>
            <person name="Giglioti E."/>
            <person name="Abreu I.L."/>
            <person name="Alves L.M.C."/>
            <person name="do Amaral A.M."/>
            <person name="Baia G.S."/>
            <person name="Blanco S.R."/>
            <person name="Brito M.S."/>
            <person name="Cannavan F.S."/>
            <person name="Celestino A.V."/>
            <person name="da Cunha A.F."/>
            <person name="Fenille R.C."/>
            <person name="Ferro J.A."/>
            <person name="Formighieri E.F."/>
            <person name="Kishi L.T."/>
            <person name="Leoni S.G."/>
            <person name="Oliveira A.R."/>
            <person name="Rosa V.E. Jr."/>
            <person name="Sassaki F.T."/>
            <person name="Sena J.A.D."/>
            <person name="de Souza A.A."/>
            <person name="Truffi D."/>
            <person name="Tsukumo F."/>
            <person name="Yanai G.M."/>
            <person name="Zaros L.G."/>
            <person name="Civerolo E.L."/>
            <person name="Simpson A.J.G."/>
            <person name="Almeida N.F. Jr."/>
            <person name="Setubal J.C."/>
            <person name="Kitajima J.P."/>
        </authorList>
    </citation>
    <scope>NUCLEOTIDE SEQUENCE [LARGE SCALE GENOMIC DNA]</scope>
    <source>
        <strain>Temecula1 / ATCC 700964</strain>
    </source>
</reference>
<sequence>MFCHLLGDNYEAVIYSTENRFTPSVYSCGNSGCLVLQFADIQSSP</sequence>
<protein>
    <recommendedName>
        <fullName>Uncharacterized protein PDa0001</fullName>
    </recommendedName>
</protein>
<geneLocation type="plasmid">
    <name>pXFPD1.3</name>
</geneLocation>
<gene>
    <name type="ordered locus">PDa0001</name>
</gene>
<feature type="chain" id="PRO_0000220281" description="Uncharacterized protein PDa0001">
    <location>
        <begin position="1"/>
        <end position="45"/>
    </location>
</feature>
<accession>Q83WL4</accession>
<name>Y2501_XYLFT</name>
<organism>
    <name type="scientific">Xylella fastidiosa (strain Temecula1 / ATCC 700964)</name>
    <dbReference type="NCBI Taxonomy" id="183190"/>
    <lineage>
        <taxon>Bacteria</taxon>
        <taxon>Pseudomonadati</taxon>
        <taxon>Pseudomonadota</taxon>
        <taxon>Gammaproteobacteria</taxon>
        <taxon>Lysobacterales</taxon>
        <taxon>Lysobacteraceae</taxon>
        <taxon>Xylella</taxon>
    </lineage>
</organism>